<keyword id="KW-0963">Cytoplasm</keyword>
<keyword id="KW-0342">GTP-binding</keyword>
<keyword id="KW-0378">Hydrolase</keyword>
<keyword id="KW-0479">Metal-binding</keyword>
<keyword id="KW-0547">Nucleotide-binding</keyword>
<keyword id="KW-0690">Ribosome biogenesis</keyword>
<keyword id="KW-0694">RNA-binding</keyword>
<keyword id="KW-0699">rRNA-binding</keyword>
<keyword id="KW-0862">Zinc</keyword>
<proteinExistence type="inferred from homology"/>
<gene>
    <name evidence="1" type="primary">rsgA</name>
    <name type="ordered locus">CPF_1990</name>
</gene>
<evidence type="ECO:0000255" key="1">
    <source>
        <dbReference type="HAMAP-Rule" id="MF_01820"/>
    </source>
</evidence>
<evidence type="ECO:0000255" key="2">
    <source>
        <dbReference type="PROSITE-ProRule" id="PRU01058"/>
    </source>
</evidence>
<comment type="function">
    <text evidence="1">One of several proteins that assist in the late maturation steps of the functional core of the 30S ribosomal subunit. Helps release RbfA from mature subunits. May play a role in the assembly of ribosomal proteins into the subunit. Circularly permuted GTPase that catalyzes slow GTP hydrolysis, GTPase activity is stimulated by the 30S ribosomal subunit.</text>
</comment>
<comment type="cofactor">
    <cofactor evidence="1">
        <name>Zn(2+)</name>
        <dbReference type="ChEBI" id="CHEBI:29105"/>
    </cofactor>
    <text evidence="1">Binds 1 zinc ion per subunit.</text>
</comment>
<comment type="subunit">
    <text evidence="1">Monomer. Associates with 30S ribosomal subunit, binds 16S rRNA.</text>
</comment>
<comment type="subcellular location">
    <subcellularLocation>
        <location evidence="1">Cytoplasm</location>
    </subcellularLocation>
</comment>
<comment type="similarity">
    <text evidence="1">Belongs to the TRAFAC class YlqF/YawG GTPase family. RsgA subfamily.</text>
</comment>
<protein>
    <recommendedName>
        <fullName evidence="1">Small ribosomal subunit biogenesis GTPase RsgA</fullName>
        <ecNumber evidence="1">3.6.1.-</ecNumber>
    </recommendedName>
</protein>
<organism>
    <name type="scientific">Clostridium perfringens (strain ATCC 13124 / DSM 756 / JCM 1290 / NCIMB 6125 / NCTC 8237 / Type A)</name>
    <dbReference type="NCBI Taxonomy" id="195103"/>
    <lineage>
        <taxon>Bacteria</taxon>
        <taxon>Bacillati</taxon>
        <taxon>Bacillota</taxon>
        <taxon>Clostridia</taxon>
        <taxon>Eubacteriales</taxon>
        <taxon>Clostridiaceae</taxon>
        <taxon>Clostridium</taxon>
    </lineage>
</organism>
<reference key="1">
    <citation type="journal article" date="2006" name="Genome Res.">
        <title>Skewed genomic variability in strains of the toxigenic bacterial pathogen, Clostridium perfringens.</title>
        <authorList>
            <person name="Myers G.S.A."/>
            <person name="Rasko D.A."/>
            <person name="Cheung J.K."/>
            <person name="Ravel J."/>
            <person name="Seshadri R."/>
            <person name="DeBoy R.T."/>
            <person name="Ren Q."/>
            <person name="Varga J."/>
            <person name="Awad M.M."/>
            <person name="Brinkac L.M."/>
            <person name="Daugherty S.C."/>
            <person name="Haft D.H."/>
            <person name="Dodson R.J."/>
            <person name="Madupu R."/>
            <person name="Nelson W.C."/>
            <person name="Rosovitz M.J."/>
            <person name="Sullivan S.A."/>
            <person name="Khouri H."/>
            <person name="Dimitrov G.I."/>
            <person name="Watkins K.L."/>
            <person name="Mulligan S."/>
            <person name="Benton J."/>
            <person name="Radune D."/>
            <person name="Fisher D.J."/>
            <person name="Atkins H.S."/>
            <person name="Hiscox T."/>
            <person name="Jost B.H."/>
            <person name="Billington S.J."/>
            <person name="Songer J.G."/>
            <person name="McClane B.A."/>
            <person name="Titball R.W."/>
            <person name="Rood J.I."/>
            <person name="Melville S.B."/>
            <person name="Paulsen I.T."/>
        </authorList>
    </citation>
    <scope>NUCLEOTIDE SEQUENCE [LARGE SCALE GENOMIC DNA]</scope>
    <source>
        <strain>ATCC 13124 / DSM 756 / JCM 1290 / NCIMB 6125 / NCTC 8237 / S 107 / Type A</strain>
    </source>
</reference>
<dbReference type="EC" id="3.6.1.-" evidence="1"/>
<dbReference type="EMBL" id="CP000246">
    <property type="protein sequence ID" value="ABG82922.1"/>
    <property type="molecule type" value="Genomic_DNA"/>
</dbReference>
<dbReference type="RefSeq" id="WP_011590943.1">
    <property type="nucleotide sequence ID" value="NC_008261.1"/>
</dbReference>
<dbReference type="SMR" id="Q0TPL7"/>
<dbReference type="STRING" id="195103.CPF_1990"/>
<dbReference type="PaxDb" id="195103-CPF_1990"/>
<dbReference type="KEGG" id="cpf:CPF_1990"/>
<dbReference type="eggNOG" id="COG1162">
    <property type="taxonomic scope" value="Bacteria"/>
</dbReference>
<dbReference type="HOGENOM" id="CLU_033617_2_1_9"/>
<dbReference type="Proteomes" id="UP000001823">
    <property type="component" value="Chromosome"/>
</dbReference>
<dbReference type="GO" id="GO:0005737">
    <property type="term" value="C:cytoplasm"/>
    <property type="evidence" value="ECO:0007669"/>
    <property type="project" value="UniProtKB-SubCell"/>
</dbReference>
<dbReference type="GO" id="GO:0005525">
    <property type="term" value="F:GTP binding"/>
    <property type="evidence" value="ECO:0007669"/>
    <property type="project" value="UniProtKB-UniRule"/>
</dbReference>
<dbReference type="GO" id="GO:0003924">
    <property type="term" value="F:GTPase activity"/>
    <property type="evidence" value="ECO:0007669"/>
    <property type="project" value="UniProtKB-UniRule"/>
</dbReference>
<dbReference type="GO" id="GO:0046872">
    <property type="term" value="F:metal ion binding"/>
    <property type="evidence" value="ECO:0007669"/>
    <property type="project" value="UniProtKB-KW"/>
</dbReference>
<dbReference type="GO" id="GO:0019843">
    <property type="term" value="F:rRNA binding"/>
    <property type="evidence" value="ECO:0007669"/>
    <property type="project" value="UniProtKB-KW"/>
</dbReference>
<dbReference type="GO" id="GO:0042274">
    <property type="term" value="P:ribosomal small subunit biogenesis"/>
    <property type="evidence" value="ECO:0007669"/>
    <property type="project" value="UniProtKB-UniRule"/>
</dbReference>
<dbReference type="CDD" id="cd04466">
    <property type="entry name" value="S1_YloQ_GTPase"/>
    <property type="match status" value="1"/>
</dbReference>
<dbReference type="CDD" id="cd01854">
    <property type="entry name" value="YjeQ_EngC"/>
    <property type="match status" value="1"/>
</dbReference>
<dbReference type="Gene3D" id="2.40.50.140">
    <property type="entry name" value="Nucleic acid-binding proteins"/>
    <property type="match status" value="1"/>
</dbReference>
<dbReference type="Gene3D" id="3.40.50.300">
    <property type="entry name" value="P-loop containing nucleotide triphosphate hydrolases"/>
    <property type="match status" value="1"/>
</dbReference>
<dbReference type="Gene3D" id="1.10.40.50">
    <property type="entry name" value="Probable gtpase engc, domain 3"/>
    <property type="match status" value="1"/>
</dbReference>
<dbReference type="HAMAP" id="MF_01820">
    <property type="entry name" value="GTPase_RsgA"/>
    <property type="match status" value="1"/>
</dbReference>
<dbReference type="InterPro" id="IPR030378">
    <property type="entry name" value="G_CP_dom"/>
</dbReference>
<dbReference type="InterPro" id="IPR012340">
    <property type="entry name" value="NA-bd_OB-fold"/>
</dbReference>
<dbReference type="InterPro" id="IPR027417">
    <property type="entry name" value="P-loop_NTPase"/>
</dbReference>
<dbReference type="InterPro" id="IPR004881">
    <property type="entry name" value="Ribosome_biogen_GTPase_RsgA"/>
</dbReference>
<dbReference type="InterPro" id="IPR010914">
    <property type="entry name" value="RsgA_GTPase_dom"/>
</dbReference>
<dbReference type="InterPro" id="IPR031944">
    <property type="entry name" value="RsgA_N"/>
</dbReference>
<dbReference type="NCBIfam" id="TIGR00157">
    <property type="entry name" value="ribosome small subunit-dependent GTPase A"/>
    <property type="match status" value="1"/>
</dbReference>
<dbReference type="PANTHER" id="PTHR32120">
    <property type="entry name" value="SMALL RIBOSOMAL SUBUNIT BIOGENESIS GTPASE RSGA"/>
    <property type="match status" value="1"/>
</dbReference>
<dbReference type="PANTHER" id="PTHR32120:SF11">
    <property type="entry name" value="SMALL RIBOSOMAL SUBUNIT BIOGENESIS GTPASE RSGA 1, MITOCHONDRIAL-RELATED"/>
    <property type="match status" value="1"/>
</dbReference>
<dbReference type="Pfam" id="PF03193">
    <property type="entry name" value="RsgA_GTPase"/>
    <property type="match status" value="1"/>
</dbReference>
<dbReference type="Pfam" id="PF16745">
    <property type="entry name" value="RsgA_N"/>
    <property type="match status" value="1"/>
</dbReference>
<dbReference type="SUPFAM" id="SSF50249">
    <property type="entry name" value="Nucleic acid-binding proteins"/>
    <property type="match status" value="1"/>
</dbReference>
<dbReference type="SUPFAM" id="SSF52540">
    <property type="entry name" value="P-loop containing nucleoside triphosphate hydrolases"/>
    <property type="match status" value="1"/>
</dbReference>
<dbReference type="PROSITE" id="PS50936">
    <property type="entry name" value="ENGC_GTPASE"/>
    <property type="match status" value="1"/>
</dbReference>
<dbReference type="PROSITE" id="PS51721">
    <property type="entry name" value="G_CP"/>
    <property type="match status" value="1"/>
</dbReference>
<accession>Q0TPL7</accession>
<sequence length="287" mass="32634">MEGIIIKGIGGFYYIKTDEGIIECKARGKFRYNSLKPMVGDRVTIKVENGKGVIEDIHERSSELIRPTVANVTQAFVVFAIKNPDINLDLLNRFLTLCEYNDIHAVVCLNKEDLCTEEEKENLKELINDIGYEVLFINAKEGKGFDALKERLEHNITVLCGPSGAGKSTLLNSFIDREHMETGSVSEKIGRGKHTTRHSELIDVDNGYLVDTPGFTTLDVTFIDRDSLKYCFPEFNDYNNLCKFNGCNHYKEPKCAVKEAVEEGKINKLRYDFYIKTLEEIINRRGN</sequence>
<name>RSGA_CLOP1</name>
<feature type="chain" id="PRO_1000188057" description="Small ribosomal subunit biogenesis GTPase RsgA">
    <location>
        <begin position="1"/>
        <end position="287"/>
    </location>
</feature>
<feature type="domain" description="CP-type G" evidence="2">
    <location>
        <begin position="61"/>
        <end position="218"/>
    </location>
</feature>
<feature type="binding site" evidence="1">
    <location>
        <begin position="110"/>
        <end position="113"/>
    </location>
    <ligand>
        <name>GTP</name>
        <dbReference type="ChEBI" id="CHEBI:37565"/>
    </ligand>
</feature>
<feature type="binding site" evidence="1">
    <location>
        <begin position="161"/>
        <end position="169"/>
    </location>
    <ligand>
        <name>GTP</name>
        <dbReference type="ChEBI" id="CHEBI:37565"/>
    </ligand>
</feature>
<feature type="binding site" evidence="1">
    <location>
        <position position="242"/>
    </location>
    <ligand>
        <name>Zn(2+)</name>
        <dbReference type="ChEBI" id="CHEBI:29105"/>
    </ligand>
</feature>
<feature type="binding site" evidence="1">
    <location>
        <position position="247"/>
    </location>
    <ligand>
        <name>Zn(2+)</name>
        <dbReference type="ChEBI" id="CHEBI:29105"/>
    </ligand>
</feature>
<feature type="binding site" evidence="1">
    <location>
        <position position="249"/>
    </location>
    <ligand>
        <name>Zn(2+)</name>
        <dbReference type="ChEBI" id="CHEBI:29105"/>
    </ligand>
</feature>
<feature type="binding site" evidence="1">
    <location>
        <position position="255"/>
    </location>
    <ligand>
        <name>Zn(2+)</name>
        <dbReference type="ChEBI" id="CHEBI:29105"/>
    </ligand>
</feature>